<gene>
    <name evidence="1" type="primary">recA</name>
    <name type="ordered locus">VP2550</name>
</gene>
<comment type="function">
    <text evidence="1">Can catalyze the hydrolysis of ATP in the presence of single-stranded DNA, the ATP-dependent uptake of single-stranded DNA by duplex DNA, and the ATP-dependent hybridization of homologous single-stranded DNAs. It interacts with LexA causing its activation and leading to its autocatalytic cleavage.</text>
</comment>
<comment type="subcellular location">
    <subcellularLocation>
        <location evidence="1">Cytoplasm</location>
    </subcellularLocation>
</comment>
<comment type="similarity">
    <text evidence="1">Belongs to the RecA family.</text>
</comment>
<dbReference type="EMBL" id="BA000031">
    <property type="protein sequence ID" value="BAC60813.1"/>
    <property type="molecule type" value="Genomic_DNA"/>
</dbReference>
<dbReference type="RefSeq" id="NP_798929.1">
    <property type="nucleotide sequence ID" value="NC_004603.1"/>
</dbReference>
<dbReference type="RefSeq" id="WP_005478550.1">
    <property type="nucleotide sequence ID" value="NC_004603.1"/>
</dbReference>
<dbReference type="SMR" id="Q87LR1"/>
<dbReference type="GeneID" id="1190074"/>
<dbReference type="KEGG" id="vpa:VP2550"/>
<dbReference type="PATRIC" id="fig|223926.6.peg.2448"/>
<dbReference type="eggNOG" id="COG0468">
    <property type="taxonomic scope" value="Bacteria"/>
</dbReference>
<dbReference type="HOGENOM" id="CLU_040469_3_2_6"/>
<dbReference type="Proteomes" id="UP000002493">
    <property type="component" value="Chromosome 1"/>
</dbReference>
<dbReference type="GO" id="GO:0005829">
    <property type="term" value="C:cytosol"/>
    <property type="evidence" value="ECO:0007669"/>
    <property type="project" value="TreeGrafter"/>
</dbReference>
<dbReference type="GO" id="GO:0005524">
    <property type="term" value="F:ATP binding"/>
    <property type="evidence" value="ECO:0007669"/>
    <property type="project" value="UniProtKB-UniRule"/>
</dbReference>
<dbReference type="GO" id="GO:0016887">
    <property type="term" value="F:ATP hydrolysis activity"/>
    <property type="evidence" value="ECO:0007669"/>
    <property type="project" value="InterPro"/>
</dbReference>
<dbReference type="GO" id="GO:0140664">
    <property type="term" value="F:ATP-dependent DNA damage sensor activity"/>
    <property type="evidence" value="ECO:0007669"/>
    <property type="project" value="InterPro"/>
</dbReference>
<dbReference type="GO" id="GO:0003684">
    <property type="term" value="F:damaged DNA binding"/>
    <property type="evidence" value="ECO:0007669"/>
    <property type="project" value="UniProtKB-UniRule"/>
</dbReference>
<dbReference type="GO" id="GO:0003697">
    <property type="term" value="F:single-stranded DNA binding"/>
    <property type="evidence" value="ECO:0007669"/>
    <property type="project" value="UniProtKB-UniRule"/>
</dbReference>
<dbReference type="GO" id="GO:0006310">
    <property type="term" value="P:DNA recombination"/>
    <property type="evidence" value="ECO:0007669"/>
    <property type="project" value="UniProtKB-UniRule"/>
</dbReference>
<dbReference type="GO" id="GO:0006281">
    <property type="term" value="P:DNA repair"/>
    <property type="evidence" value="ECO:0007669"/>
    <property type="project" value="UniProtKB-UniRule"/>
</dbReference>
<dbReference type="GO" id="GO:0009432">
    <property type="term" value="P:SOS response"/>
    <property type="evidence" value="ECO:0007669"/>
    <property type="project" value="UniProtKB-UniRule"/>
</dbReference>
<dbReference type="CDD" id="cd00983">
    <property type="entry name" value="RecA"/>
    <property type="match status" value="1"/>
</dbReference>
<dbReference type="FunFam" id="3.40.50.300:FF:000087">
    <property type="entry name" value="Recombinase RecA"/>
    <property type="match status" value="1"/>
</dbReference>
<dbReference type="Gene3D" id="3.40.50.300">
    <property type="entry name" value="P-loop containing nucleotide triphosphate hydrolases"/>
    <property type="match status" value="1"/>
</dbReference>
<dbReference type="HAMAP" id="MF_00268">
    <property type="entry name" value="RecA"/>
    <property type="match status" value="1"/>
</dbReference>
<dbReference type="InterPro" id="IPR003593">
    <property type="entry name" value="AAA+_ATPase"/>
</dbReference>
<dbReference type="InterPro" id="IPR013765">
    <property type="entry name" value="DNA_recomb/repair_RecA"/>
</dbReference>
<dbReference type="InterPro" id="IPR020584">
    <property type="entry name" value="DNA_recomb/repair_RecA_CS"/>
</dbReference>
<dbReference type="InterPro" id="IPR027417">
    <property type="entry name" value="P-loop_NTPase"/>
</dbReference>
<dbReference type="InterPro" id="IPR049261">
    <property type="entry name" value="RecA-like_C"/>
</dbReference>
<dbReference type="InterPro" id="IPR049428">
    <property type="entry name" value="RecA-like_N"/>
</dbReference>
<dbReference type="InterPro" id="IPR020588">
    <property type="entry name" value="RecA_ATP-bd"/>
</dbReference>
<dbReference type="InterPro" id="IPR023400">
    <property type="entry name" value="RecA_C_sf"/>
</dbReference>
<dbReference type="InterPro" id="IPR020587">
    <property type="entry name" value="RecA_monomer-monomer_interface"/>
</dbReference>
<dbReference type="NCBIfam" id="TIGR02012">
    <property type="entry name" value="tigrfam_recA"/>
    <property type="match status" value="1"/>
</dbReference>
<dbReference type="PANTHER" id="PTHR45900:SF1">
    <property type="entry name" value="MITOCHONDRIAL DNA REPAIR PROTEIN RECA HOMOLOG-RELATED"/>
    <property type="match status" value="1"/>
</dbReference>
<dbReference type="PANTHER" id="PTHR45900">
    <property type="entry name" value="RECA"/>
    <property type="match status" value="1"/>
</dbReference>
<dbReference type="Pfam" id="PF00154">
    <property type="entry name" value="RecA"/>
    <property type="match status" value="1"/>
</dbReference>
<dbReference type="Pfam" id="PF21096">
    <property type="entry name" value="RecA_C"/>
    <property type="match status" value="1"/>
</dbReference>
<dbReference type="PRINTS" id="PR00142">
    <property type="entry name" value="RECA"/>
</dbReference>
<dbReference type="SMART" id="SM00382">
    <property type="entry name" value="AAA"/>
    <property type="match status" value="1"/>
</dbReference>
<dbReference type="SUPFAM" id="SSF52540">
    <property type="entry name" value="P-loop containing nucleoside triphosphate hydrolases"/>
    <property type="match status" value="1"/>
</dbReference>
<dbReference type="SUPFAM" id="SSF54752">
    <property type="entry name" value="RecA protein, C-terminal domain"/>
    <property type="match status" value="1"/>
</dbReference>
<dbReference type="PROSITE" id="PS00321">
    <property type="entry name" value="RECA_1"/>
    <property type="match status" value="1"/>
</dbReference>
<dbReference type="PROSITE" id="PS50162">
    <property type="entry name" value="RECA_2"/>
    <property type="match status" value="1"/>
</dbReference>
<dbReference type="PROSITE" id="PS50163">
    <property type="entry name" value="RECA_3"/>
    <property type="match status" value="1"/>
</dbReference>
<reference key="1">
    <citation type="journal article" date="2003" name="Lancet">
        <title>Genome sequence of Vibrio parahaemolyticus: a pathogenic mechanism distinct from that of V. cholerae.</title>
        <authorList>
            <person name="Makino K."/>
            <person name="Oshima K."/>
            <person name="Kurokawa K."/>
            <person name="Yokoyama K."/>
            <person name="Uda T."/>
            <person name="Tagomori K."/>
            <person name="Iijima Y."/>
            <person name="Najima M."/>
            <person name="Nakano M."/>
            <person name="Yamashita A."/>
            <person name="Kubota Y."/>
            <person name="Kimura S."/>
            <person name="Yasunaga T."/>
            <person name="Honda T."/>
            <person name="Shinagawa H."/>
            <person name="Hattori M."/>
            <person name="Iida T."/>
        </authorList>
    </citation>
    <scope>NUCLEOTIDE SEQUENCE [LARGE SCALE GENOMIC DNA]</scope>
    <source>
        <strain>RIMD 2210633</strain>
    </source>
</reference>
<sequence length="347" mass="37433">MDENKQKALAAALGQIEKQFGKGSIMRLGDNRAMDVETISTGSLSLDIALGAGGLPMGRIVEIYGPESSGKTTLTLELIAAAQREGKTCAFIDAEHALDPVYAKKLGVDIDALLVSQPDTGEQALEICDALARSGAIDVMVVDSVAALTPKAEIEGEMGDSHMGLQARMLSQAMRKLTGNLKQSNCMCIFINQIRMKIGVMFGNPETTTGGNALKFYASVRLDIRRTGAIKEGDEVVGNETRIKVVKNKIAAPFKEANTQIMYGQGFNREGELIDLGVKHKLVEKAGAWYSYNGDKIGQGKANACNYLREHPEIAKTIDTKLREMLLSPAQPEAPAAGEKPEQEEEF</sequence>
<feature type="chain" id="PRO_0000122894" description="Protein RecA">
    <location>
        <begin position="1"/>
        <end position="347"/>
    </location>
</feature>
<feature type="region of interest" description="Disordered" evidence="2">
    <location>
        <begin position="328"/>
        <end position="347"/>
    </location>
</feature>
<feature type="binding site" evidence="1">
    <location>
        <begin position="65"/>
        <end position="72"/>
    </location>
    <ligand>
        <name>ATP</name>
        <dbReference type="ChEBI" id="CHEBI:30616"/>
    </ligand>
</feature>
<name>RECA_VIBPA</name>
<evidence type="ECO:0000255" key="1">
    <source>
        <dbReference type="HAMAP-Rule" id="MF_00268"/>
    </source>
</evidence>
<evidence type="ECO:0000256" key="2">
    <source>
        <dbReference type="SAM" id="MobiDB-lite"/>
    </source>
</evidence>
<accession>Q87LR1</accession>
<organism>
    <name type="scientific">Vibrio parahaemolyticus serotype O3:K6 (strain RIMD 2210633)</name>
    <dbReference type="NCBI Taxonomy" id="223926"/>
    <lineage>
        <taxon>Bacteria</taxon>
        <taxon>Pseudomonadati</taxon>
        <taxon>Pseudomonadota</taxon>
        <taxon>Gammaproteobacteria</taxon>
        <taxon>Vibrionales</taxon>
        <taxon>Vibrionaceae</taxon>
        <taxon>Vibrio</taxon>
    </lineage>
</organism>
<proteinExistence type="inferred from homology"/>
<keyword id="KW-0067">ATP-binding</keyword>
<keyword id="KW-0963">Cytoplasm</keyword>
<keyword id="KW-0227">DNA damage</keyword>
<keyword id="KW-0233">DNA recombination</keyword>
<keyword id="KW-0234">DNA repair</keyword>
<keyword id="KW-0238">DNA-binding</keyword>
<keyword id="KW-0547">Nucleotide-binding</keyword>
<keyword id="KW-0742">SOS response</keyword>
<protein>
    <recommendedName>
        <fullName evidence="1">Protein RecA</fullName>
    </recommendedName>
    <alternativeName>
        <fullName evidence="1">Recombinase A</fullName>
    </alternativeName>
</protein>